<feature type="chain" id="PRO_0000094816" description="RNA/RNP complex-1-interacting phosphatase">
    <location>
        <begin position="1"/>
        <end position="330"/>
    </location>
</feature>
<feature type="domain" description="Tyrosine-protein phosphatase" evidence="2">
    <location>
        <begin position="61"/>
        <end position="208"/>
    </location>
</feature>
<feature type="region of interest" description="Disordered" evidence="3">
    <location>
        <begin position="1"/>
        <end position="32"/>
    </location>
</feature>
<feature type="compositionally biased region" description="Basic residues" evidence="3">
    <location>
        <begin position="1"/>
        <end position="12"/>
    </location>
</feature>
<feature type="active site" description="Phosphocysteine intermediate" evidence="2 5 10">
    <location>
        <position position="152"/>
    </location>
</feature>
<feature type="active site" description="Proton donor/acceptor" evidence="1">
    <location>
        <position position="158"/>
    </location>
</feature>
<feature type="binding site" evidence="9">
    <location>
        <begin position="153"/>
        <end position="158"/>
    </location>
    <ligand>
        <name>substrate</name>
    </ligand>
</feature>
<feature type="splice variant" id="VSP_062169" description="In isoform 1.">
    <original>M</original>
    <variation>MRNSETLERGVGGCRVFSCLGSYPGIEGAGLALLADLALGGRLLGTHM</variation>
    <location>
        <position position="1"/>
    </location>
</feature>
<feature type="splice variant" id="VSP_062170" description="In isoform 2.">
    <original>YLIDVEGVRPDDAIELFNRCRGHCLERQNYIEDLQNGPIRKNWNSSVPRSSDFEDSAHLMQ</original>
    <variation>RSLALSPRLECSGTISTHSKFCFPGSRRSPASASQVAGTTGARHHARLIFCIFSRDVVSPC</variation>
    <location>
        <begin position="166"/>
        <end position="226"/>
    </location>
</feature>
<feature type="splice variant" id="VSP_062171" description="In isoform 2.">
    <location>
        <begin position="227"/>
        <end position="330"/>
    </location>
</feature>
<feature type="mutagenesis site" description="No effect on phosphatase activity with ATP and ADP." evidence="5">
    <original>H</original>
    <variation>G</variation>
    <location>
        <position position="119"/>
    </location>
</feature>
<feature type="mutagenesis site" description="Loss of activity. No effect in RNA-binding." evidence="4 5 7">
    <original>C</original>
    <variation>S</variation>
    <location>
        <position position="152"/>
    </location>
</feature>
<feature type="mutagenesis site" description="Strongly decreases phosphatase activity with ATP and ADP." evidence="5">
    <original>H</original>
    <variation>A</variation>
    <location>
        <position position="154"/>
    </location>
</feature>
<feature type="mutagenesis site" description="Strongly decreases phosphatase activity with ATP and ADP." evidence="5">
    <original>N</original>
    <variation>A</variation>
    <location>
        <position position="157"/>
    </location>
</feature>
<feature type="mutagenesis site" description="Slightly decreases phosphatase activity with ATP. Strongly decreases phosphatase activity with ADP." evidence="5">
    <original>R</original>
    <variation>K</variation>
    <location>
        <position position="192"/>
    </location>
</feature>
<feature type="sequence conflict" description="In Ref. 5; AAH00346." evidence="8" ref="5">
    <original>R</original>
    <variation>I</variation>
    <location>
        <position position="165"/>
    </location>
</feature>
<feature type="helix" evidence="12">
    <location>
        <begin position="35"/>
        <end position="37"/>
    </location>
</feature>
<feature type="strand" evidence="12">
    <location>
        <begin position="48"/>
        <end position="53"/>
    </location>
</feature>
<feature type="helix" evidence="12">
    <location>
        <begin position="59"/>
        <end position="64"/>
    </location>
</feature>
<feature type="helix" evidence="12">
    <location>
        <begin position="67"/>
        <end position="69"/>
    </location>
</feature>
<feature type="helix" evidence="12">
    <location>
        <begin position="73"/>
        <end position="82"/>
    </location>
</feature>
<feature type="strand" evidence="12">
    <location>
        <begin position="87"/>
        <end position="92"/>
    </location>
</feature>
<feature type="helix" evidence="12">
    <location>
        <begin position="102"/>
        <end position="104"/>
    </location>
</feature>
<feature type="strand" evidence="12">
    <location>
        <begin position="111"/>
        <end position="113"/>
    </location>
</feature>
<feature type="strand" evidence="12">
    <location>
        <begin position="118"/>
        <end position="120"/>
    </location>
</feature>
<feature type="helix" evidence="12">
    <location>
        <begin position="124"/>
        <end position="139"/>
    </location>
</feature>
<feature type="strand" evidence="12">
    <location>
        <begin position="147"/>
        <end position="151"/>
    </location>
</feature>
<feature type="strand" evidence="12">
    <location>
        <begin position="153"/>
        <end position="156"/>
    </location>
</feature>
<feature type="helix" evidence="12">
    <location>
        <begin position="157"/>
        <end position="171"/>
    </location>
</feature>
<feature type="helix" evidence="12">
    <location>
        <begin position="175"/>
        <end position="186"/>
    </location>
</feature>
<feature type="helix" evidence="12">
    <location>
        <begin position="193"/>
        <end position="201"/>
    </location>
</feature>
<feature type="sequence conflict" description="In Ref. 3; CAH10467." evidence="8" ref="3">
    <original>L</original>
    <variation>R</variation>
    <location sequence="O75319-2">
        <position position="168"/>
    </location>
</feature>
<feature type="sequence conflict" description="In Ref. 3; CAH10467." evidence="8" ref="3">
    <original>G</original>
    <variation>S</variation>
    <location sequence="O75319-2">
        <position position="190"/>
    </location>
</feature>
<comment type="function">
    <text evidence="4 5 7">Possesses RNA 5'-triphosphatase and diphosphatase activities, but displays a poor protein-tyrosine phosphatase activity. In addition, has phosphatase activity with ATP, ADP and O-methylfluorescein phosphate (in vitro). Binds to RNA. May participate in nuclear mRNA metabolism.</text>
</comment>
<comment type="subunit">
    <text evidence="5 6">Monomer (PubMed:24531476). May interact with SFRS7 and SFRS9/SRP30C (PubMed:24447265).</text>
</comment>
<comment type="subcellular location">
    <subcellularLocation>
        <location evidence="7">Nucleus</location>
    </subcellularLocation>
    <subcellularLocation>
        <location evidence="7">Nucleus speckle</location>
    </subcellularLocation>
</comment>
<comment type="alternative products">
    <event type="alternative splicing"/>
    <event type="alternative initiation"/>
    <isoform>
        <id>O75319-3</id>
        <name>3</name>
        <sequence type="displayed"/>
    </isoform>
    <isoform>
        <id>O75319-1</id>
        <name>1</name>
        <sequence type="described" ref="VSP_062169"/>
    </isoform>
    <isoform>
        <id>O75319-2</id>
        <name>2</name>
        <sequence type="described" ref="VSP_062170 VSP_062171"/>
    </isoform>
</comment>
<comment type="miscellaneous">
    <molecule>Isoform 1</molecule>
    <text evidence="8">Produced by alternative initiation (Probable). Based on proteomic data (Probable).</text>
</comment>
<comment type="miscellaneous">
    <molecule>Isoform 3</molecule>
    <text evidence="8">Major isoform.</text>
</comment>
<comment type="similarity">
    <text evidence="8">Belongs to the protein-tyrosine phosphatase family. Non-receptor class dual specificity subfamily.</text>
</comment>
<comment type="sequence caution" evidence="8">
    <conflict type="erroneous initiation">
        <sequence resource="EMBL-CDS" id="CAH10467"/>
    </conflict>
    <text>Extended N-terminus.</text>
</comment>
<reference key="1">
    <citation type="journal article" date="1998" name="J. Biol. Chem.">
        <title>PIR1, a novel phosphatase that exhibits high affinity to RNA ribonucleoprotein complexes.</title>
        <authorList>
            <person name="Yuan Y."/>
            <person name="Li D.-M."/>
            <person name="Sun H."/>
        </authorList>
    </citation>
    <scope>NUCLEOTIDE SEQUENCE [MRNA] (ISOFORM 3)</scope>
    <scope>FUNCTION</scope>
    <scope>INTERACTION WITH SFRS7 AND SFRS9</scope>
    <scope>MUTAGENESIS OF CYS-152</scope>
    <scope>ACTIVE SITE</scope>
    <scope>SUBCELLULAR LOCATION</scope>
</reference>
<reference key="2">
    <citation type="journal article" date="2004" name="Nat. Genet.">
        <title>Complete sequencing and characterization of 21,243 full-length human cDNAs.</title>
        <authorList>
            <person name="Ota T."/>
            <person name="Suzuki Y."/>
            <person name="Nishikawa T."/>
            <person name="Otsuki T."/>
            <person name="Sugiyama T."/>
            <person name="Irie R."/>
            <person name="Wakamatsu A."/>
            <person name="Hayashi K."/>
            <person name="Sato H."/>
            <person name="Nagai K."/>
            <person name="Kimura K."/>
            <person name="Makita H."/>
            <person name="Sekine M."/>
            <person name="Obayashi M."/>
            <person name="Nishi T."/>
            <person name="Shibahara T."/>
            <person name="Tanaka T."/>
            <person name="Ishii S."/>
            <person name="Yamamoto J."/>
            <person name="Saito K."/>
            <person name="Kawai Y."/>
            <person name="Isono Y."/>
            <person name="Nakamura Y."/>
            <person name="Nagahari K."/>
            <person name="Murakami K."/>
            <person name="Yasuda T."/>
            <person name="Iwayanagi T."/>
            <person name="Wagatsuma M."/>
            <person name="Shiratori A."/>
            <person name="Sudo H."/>
            <person name="Hosoiri T."/>
            <person name="Kaku Y."/>
            <person name="Kodaira H."/>
            <person name="Kondo H."/>
            <person name="Sugawara M."/>
            <person name="Takahashi M."/>
            <person name="Kanda K."/>
            <person name="Yokoi T."/>
            <person name="Furuya T."/>
            <person name="Kikkawa E."/>
            <person name="Omura Y."/>
            <person name="Abe K."/>
            <person name="Kamihara K."/>
            <person name="Katsuta N."/>
            <person name="Sato K."/>
            <person name="Tanikawa M."/>
            <person name="Yamazaki M."/>
            <person name="Ninomiya K."/>
            <person name="Ishibashi T."/>
            <person name="Yamashita H."/>
            <person name="Murakawa K."/>
            <person name="Fujimori K."/>
            <person name="Tanai H."/>
            <person name="Kimata M."/>
            <person name="Watanabe M."/>
            <person name="Hiraoka S."/>
            <person name="Chiba Y."/>
            <person name="Ishida S."/>
            <person name="Ono Y."/>
            <person name="Takiguchi S."/>
            <person name="Watanabe S."/>
            <person name="Yosida M."/>
            <person name="Hotuta T."/>
            <person name="Kusano J."/>
            <person name="Kanehori K."/>
            <person name="Takahashi-Fujii A."/>
            <person name="Hara H."/>
            <person name="Tanase T.-O."/>
            <person name="Nomura Y."/>
            <person name="Togiya S."/>
            <person name="Komai F."/>
            <person name="Hara R."/>
            <person name="Takeuchi K."/>
            <person name="Arita M."/>
            <person name="Imose N."/>
            <person name="Musashino K."/>
            <person name="Yuuki H."/>
            <person name="Oshima A."/>
            <person name="Sasaki N."/>
            <person name="Aotsuka S."/>
            <person name="Yoshikawa Y."/>
            <person name="Matsunawa H."/>
            <person name="Ichihara T."/>
            <person name="Shiohata N."/>
            <person name="Sano S."/>
            <person name="Moriya S."/>
            <person name="Momiyama H."/>
            <person name="Satoh N."/>
            <person name="Takami S."/>
            <person name="Terashima Y."/>
            <person name="Suzuki O."/>
            <person name="Nakagawa S."/>
            <person name="Senoh A."/>
            <person name="Mizoguchi H."/>
            <person name="Goto Y."/>
            <person name="Shimizu F."/>
            <person name="Wakebe H."/>
            <person name="Hishigaki H."/>
            <person name="Watanabe T."/>
            <person name="Sugiyama A."/>
            <person name="Takemoto M."/>
            <person name="Kawakami B."/>
            <person name="Yamazaki M."/>
            <person name="Watanabe K."/>
            <person name="Kumagai A."/>
            <person name="Itakura S."/>
            <person name="Fukuzumi Y."/>
            <person name="Fujimori Y."/>
            <person name="Komiyama M."/>
            <person name="Tashiro H."/>
            <person name="Tanigami A."/>
            <person name="Fujiwara T."/>
            <person name="Ono T."/>
            <person name="Yamada K."/>
            <person name="Fujii Y."/>
            <person name="Ozaki K."/>
            <person name="Hirao M."/>
            <person name="Ohmori Y."/>
            <person name="Kawabata A."/>
            <person name="Hikiji T."/>
            <person name="Kobatake N."/>
            <person name="Inagaki H."/>
            <person name="Ikema Y."/>
            <person name="Okamoto S."/>
            <person name="Okitani R."/>
            <person name="Kawakami T."/>
            <person name="Noguchi S."/>
            <person name="Itoh T."/>
            <person name="Shigeta K."/>
            <person name="Senba T."/>
            <person name="Matsumura K."/>
            <person name="Nakajima Y."/>
            <person name="Mizuno T."/>
            <person name="Morinaga M."/>
            <person name="Sasaki M."/>
            <person name="Togashi T."/>
            <person name="Oyama M."/>
            <person name="Hata H."/>
            <person name="Watanabe M."/>
            <person name="Komatsu T."/>
            <person name="Mizushima-Sugano J."/>
            <person name="Satoh T."/>
            <person name="Shirai Y."/>
            <person name="Takahashi Y."/>
            <person name="Nakagawa K."/>
            <person name="Okumura K."/>
            <person name="Nagase T."/>
            <person name="Nomura N."/>
            <person name="Kikuchi H."/>
            <person name="Masuho Y."/>
            <person name="Yamashita R."/>
            <person name="Nakai K."/>
            <person name="Yada T."/>
            <person name="Nakamura Y."/>
            <person name="Ohara O."/>
            <person name="Isogai T."/>
            <person name="Sugano S."/>
        </authorList>
    </citation>
    <scope>NUCLEOTIDE SEQUENCE [LARGE SCALE MRNA] (ISOFORM 3)</scope>
</reference>
<reference key="3">
    <citation type="journal article" date="2007" name="BMC Genomics">
        <title>The full-ORF clone resource of the German cDNA consortium.</title>
        <authorList>
            <person name="Bechtel S."/>
            <person name="Rosenfelder H."/>
            <person name="Duda A."/>
            <person name="Schmidt C.P."/>
            <person name="Ernst U."/>
            <person name="Wellenreuther R."/>
            <person name="Mehrle A."/>
            <person name="Schuster C."/>
            <person name="Bahr A."/>
            <person name="Bloecker H."/>
            <person name="Heubner D."/>
            <person name="Hoerlein A."/>
            <person name="Michel G."/>
            <person name="Wedler H."/>
            <person name="Koehrer K."/>
            <person name="Ottenwaelder B."/>
            <person name="Poustka A."/>
            <person name="Wiemann S."/>
            <person name="Schupp I."/>
        </authorList>
    </citation>
    <scope>NUCLEOTIDE SEQUENCE [LARGE SCALE MRNA] (ISOFORM 2)</scope>
    <source>
        <tissue>Cerebellum</tissue>
    </source>
</reference>
<reference key="4">
    <citation type="journal article" date="2005" name="Nature">
        <title>Generation and annotation of the DNA sequences of human chromosomes 2 and 4.</title>
        <authorList>
            <person name="Hillier L.W."/>
            <person name="Graves T.A."/>
            <person name="Fulton R.S."/>
            <person name="Fulton L.A."/>
            <person name="Pepin K.H."/>
            <person name="Minx P."/>
            <person name="Wagner-McPherson C."/>
            <person name="Layman D."/>
            <person name="Wylie K."/>
            <person name="Sekhon M."/>
            <person name="Becker M.C."/>
            <person name="Fewell G.A."/>
            <person name="Delehaunty K.D."/>
            <person name="Miner T.L."/>
            <person name="Nash W.E."/>
            <person name="Kremitzki C."/>
            <person name="Oddy L."/>
            <person name="Du H."/>
            <person name="Sun H."/>
            <person name="Bradshaw-Cordum H."/>
            <person name="Ali J."/>
            <person name="Carter J."/>
            <person name="Cordes M."/>
            <person name="Harris A."/>
            <person name="Isak A."/>
            <person name="van Brunt A."/>
            <person name="Nguyen C."/>
            <person name="Du F."/>
            <person name="Courtney L."/>
            <person name="Kalicki J."/>
            <person name="Ozersky P."/>
            <person name="Abbott S."/>
            <person name="Armstrong J."/>
            <person name="Belter E.A."/>
            <person name="Caruso L."/>
            <person name="Cedroni M."/>
            <person name="Cotton M."/>
            <person name="Davidson T."/>
            <person name="Desai A."/>
            <person name="Elliott G."/>
            <person name="Erb T."/>
            <person name="Fronick C."/>
            <person name="Gaige T."/>
            <person name="Haakenson W."/>
            <person name="Haglund K."/>
            <person name="Holmes A."/>
            <person name="Harkins R."/>
            <person name="Kim K."/>
            <person name="Kruchowski S.S."/>
            <person name="Strong C.M."/>
            <person name="Grewal N."/>
            <person name="Goyea E."/>
            <person name="Hou S."/>
            <person name="Levy A."/>
            <person name="Martinka S."/>
            <person name="Mead K."/>
            <person name="McLellan M.D."/>
            <person name="Meyer R."/>
            <person name="Randall-Maher J."/>
            <person name="Tomlinson C."/>
            <person name="Dauphin-Kohlberg S."/>
            <person name="Kozlowicz-Reilly A."/>
            <person name="Shah N."/>
            <person name="Swearengen-Shahid S."/>
            <person name="Snider J."/>
            <person name="Strong J.T."/>
            <person name="Thompson J."/>
            <person name="Yoakum M."/>
            <person name="Leonard S."/>
            <person name="Pearman C."/>
            <person name="Trani L."/>
            <person name="Radionenko M."/>
            <person name="Waligorski J.E."/>
            <person name="Wang C."/>
            <person name="Rock S.M."/>
            <person name="Tin-Wollam A.-M."/>
            <person name="Maupin R."/>
            <person name="Latreille P."/>
            <person name="Wendl M.C."/>
            <person name="Yang S.-P."/>
            <person name="Pohl C."/>
            <person name="Wallis J.W."/>
            <person name="Spieth J."/>
            <person name="Bieri T.A."/>
            <person name="Berkowicz N."/>
            <person name="Nelson J.O."/>
            <person name="Osborne J."/>
            <person name="Ding L."/>
            <person name="Meyer R."/>
            <person name="Sabo A."/>
            <person name="Shotland Y."/>
            <person name="Sinha P."/>
            <person name="Wohldmann P.E."/>
            <person name="Cook L.L."/>
            <person name="Hickenbotham M.T."/>
            <person name="Eldred J."/>
            <person name="Williams D."/>
            <person name="Jones T.A."/>
            <person name="She X."/>
            <person name="Ciccarelli F.D."/>
            <person name="Izaurralde E."/>
            <person name="Taylor J."/>
            <person name="Schmutz J."/>
            <person name="Myers R.M."/>
            <person name="Cox D.R."/>
            <person name="Huang X."/>
            <person name="McPherson J.D."/>
            <person name="Mardis E.R."/>
            <person name="Clifton S.W."/>
            <person name="Warren W.C."/>
            <person name="Chinwalla A.T."/>
            <person name="Eddy S.R."/>
            <person name="Marra M.A."/>
            <person name="Ovcharenko I."/>
            <person name="Furey T.S."/>
            <person name="Miller W."/>
            <person name="Eichler E.E."/>
            <person name="Bork P."/>
            <person name="Suyama M."/>
            <person name="Torrents D."/>
            <person name="Waterston R.H."/>
            <person name="Wilson R.K."/>
        </authorList>
    </citation>
    <scope>NUCLEOTIDE SEQUENCE [LARGE SCALE GENOMIC DNA]</scope>
</reference>
<reference key="5">
    <citation type="journal article" date="2004" name="Genome Res.">
        <title>The status, quality, and expansion of the NIH full-length cDNA project: the Mammalian Gene Collection (MGC).</title>
        <authorList>
            <consortium name="The MGC Project Team"/>
        </authorList>
    </citation>
    <scope>NUCLEOTIDE SEQUENCE [LARGE SCALE MRNA] (ISOFORM 3)</scope>
    <source>
        <tissue>Muscle</tissue>
    </source>
</reference>
<reference key="6">
    <citation type="journal article" date="1999" name="J. Biol. Chem.">
        <title>Human PIR1 of the protein-tyrosine phosphatase superfamily has RNA 5'-triphosphatase and diphosphatase activities.</title>
        <authorList>
            <person name="Deshpande T."/>
            <person name="Takagi T."/>
            <person name="Hao L."/>
            <person name="Buratowski S."/>
            <person name="Charbonneau H."/>
        </authorList>
    </citation>
    <scope>CHARACTERIZATION</scope>
    <scope>MUTAGENESIS OF CYS-152</scope>
    <scope>FUNCTION</scope>
</reference>
<reference key="7">
    <citation type="journal article" date="2014" name="Acta Crystallogr. D">
        <title>The family-wide structure and function of human dual-specificity protein phosphatases.</title>
        <authorList>
            <person name="Jeong D.G."/>
            <person name="Wei C.H."/>
            <person name="Ku B."/>
            <person name="Jeon T.J."/>
            <person name="Chien P.N."/>
            <person name="Kim J.K."/>
            <person name="Park S.Y."/>
            <person name="Hwang H.S."/>
            <person name="Ryu S.Y."/>
            <person name="Park H."/>
            <person name="Kim D.S."/>
            <person name="Kim S.J."/>
            <person name="Ryu S.E."/>
        </authorList>
    </citation>
    <scope>X-RAY CRYSTALLOGRAPHY (2.38 ANGSTROMS) OF 28-208 IN COMPLEX WITH THE SUBSTRATE ANALOG PHOSPHATE</scope>
    <scope>SUBUNIT</scope>
</reference>
<reference key="8">
    <citation type="journal article" date="2014" name="Biochemistry">
        <title>Structure of human PIR1, an atypical dual-specificity phosphatase.</title>
        <authorList>
            <person name="Sankhala R.S."/>
            <person name="Lokareddy R.K."/>
            <person name="Cingolani G."/>
        </authorList>
    </citation>
    <scope>X-RAY CRYSTALLOGRAPHY (1.20 ANGSTROMS) OF 76-254 OF MUTANT SER-152 IN COMPLEX WITH PHOSPHATE</scope>
    <scope>MUTAGENESIS OF HIS-119; CYS-152; HIS-154; ASN-157 AND ARG-192</scope>
    <scope>ACTIVE SITE</scope>
    <scope>FUNCTION</scope>
</reference>
<evidence type="ECO:0000255" key="1"/>
<evidence type="ECO:0000255" key="2">
    <source>
        <dbReference type="PROSITE-ProRule" id="PRU00160"/>
    </source>
</evidence>
<evidence type="ECO:0000256" key="3">
    <source>
        <dbReference type="SAM" id="MobiDB-lite"/>
    </source>
</evidence>
<evidence type="ECO:0000269" key="4">
    <source>
    </source>
</evidence>
<evidence type="ECO:0000269" key="5">
    <source>
    </source>
</evidence>
<evidence type="ECO:0000269" key="6">
    <source>
    </source>
</evidence>
<evidence type="ECO:0000269" key="7">
    <source>
    </source>
</evidence>
<evidence type="ECO:0000305" key="8"/>
<evidence type="ECO:0000305" key="9">
    <source>
    </source>
</evidence>
<evidence type="ECO:0000305" key="10">
    <source>
    </source>
</evidence>
<evidence type="ECO:0000312" key="11">
    <source>
        <dbReference type="HGNC" id="HGNC:3066"/>
    </source>
</evidence>
<evidence type="ECO:0007829" key="12">
    <source>
        <dbReference type="PDB" id="4NYH"/>
    </source>
</evidence>
<protein>
    <recommendedName>
        <fullName evidence="8">RNA/RNP complex-1-interacting phosphatase</fullName>
        <ecNumber>3.1.3.-</ecNumber>
    </recommendedName>
    <alternativeName>
        <fullName>Dual specificity protein phosphatase 11</fullName>
    </alternativeName>
    <alternativeName>
        <fullName>Phosphatase that interacts with RNA/RNP complex 1</fullName>
    </alternativeName>
</protein>
<name>DUS11_HUMAN</name>
<dbReference type="EC" id="3.1.3.-"/>
<dbReference type="EMBL" id="AF023917">
    <property type="protein sequence ID" value="AAC39925.1"/>
    <property type="molecule type" value="mRNA"/>
</dbReference>
<dbReference type="EMBL" id="AK315271">
    <property type="protein sequence ID" value="BAG37685.1"/>
    <property type="molecule type" value="mRNA"/>
</dbReference>
<dbReference type="EMBL" id="CR627368">
    <property type="protein sequence ID" value="CAH10467.1"/>
    <property type="status" value="ALT_INIT"/>
    <property type="molecule type" value="mRNA"/>
</dbReference>
<dbReference type="EMBL" id="AC092653">
    <property type="status" value="NOT_ANNOTATED_CDS"/>
    <property type="molecule type" value="Genomic_DNA"/>
</dbReference>
<dbReference type="EMBL" id="BC000346">
    <property type="protein sequence ID" value="AAH00346.1"/>
    <property type="molecule type" value="mRNA"/>
</dbReference>
<dbReference type="CCDS" id="CCDS1928.3">
    <molecule id="O75319-3"/>
</dbReference>
<dbReference type="RefSeq" id="NP_001411578.1">
    <molecule id="O75319-1"/>
    <property type="nucleotide sequence ID" value="NM_001424649.1"/>
</dbReference>
<dbReference type="RefSeq" id="NP_003575.3">
    <molecule id="O75319-3"/>
    <property type="nucleotide sequence ID" value="NM_003584.3"/>
</dbReference>
<dbReference type="PDB" id="4JMJ">
    <property type="method" value="X-ray"/>
    <property type="resolution" value="2.38 A"/>
    <property type="chains" value="A=28-208"/>
</dbReference>
<dbReference type="PDB" id="4MBB">
    <property type="method" value="X-ray"/>
    <property type="resolution" value="1.85 A"/>
    <property type="chains" value="A=29-207"/>
</dbReference>
<dbReference type="PDB" id="4NYH">
    <property type="method" value="X-ray"/>
    <property type="resolution" value="1.20 A"/>
    <property type="chains" value="A/B/C=29-205"/>
</dbReference>
<dbReference type="PDBsum" id="4JMJ"/>
<dbReference type="PDBsum" id="4MBB"/>
<dbReference type="PDBsum" id="4NYH"/>
<dbReference type="SMR" id="O75319"/>
<dbReference type="BioGRID" id="114024">
    <property type="interactions" value="91"/>
</dbReference>
<dbReference type="FunCoup" id="O75319">
    <property type="interactions" value="2486"/>
</dbReference>
<dbReference type="IntAct" id="O75319">
    <property type="interactions" value="41"/>
</dbReference>
<dbReference type="MINT" id="O75319"/>
<dbReference type="STRING" id="9606.ENSP00000272444"/>
<dbReference type="DEPOD" id="DUSP11"/>
<dbReference type="GlyGen" id="O75319">
    <property type="glycosylation" value="1 site, 1 O-linked glycan (1 site)"/>
</dbReference>
<dbReference type="iPTMnet" id="O75319"/>
<dbReference type="PhosphoSitePlus" id="O75319"/>
<dbReference type="BioMuta" id="DUSP11"/>
<dbReference type="jPOST" id="O75319"/>
<dbReference type="MassIVE" id="O75319"/>
<dbReference type="PaxDb" id="9606-ENSP00000272444"/>
<dbReference type="PeptideAtlas" id="O75319"/>
<dbReference type="ProteomicsDB" id="12230"/>
<dbReference type="ProteomicsDB" id="49891">
    <molecule id="O75319-1"/>
</dbReference>
<dbReference type="ProteomicsDB" id="49892">
    <molecule id="O75319-2"/>
</dbReference>
<dbReference type="Pumba" id="O75319"/>
<dbReference type="Antibodypedia" id="31366">
    <property type="antibodies" value="115 antibodies from 24 providers"/>
</dbReference>
<dbReference type="DNASU" id="8446"/>
<dbReference type="Ensembl" id="ENST00000272444.8">
    <molecule id="O75319-3"/>
    <property type="protein sequence ID" value="ENSP00000272444.4"/>
    <property type="gene ID" value="ENSG00000144048.12"/>
</dbReference>
<dbReference type="Ensembl" id="ENST00000443070.5">
    <molecule id="O75319-2"/>
    <property type="protein sequence ID" value="ENSP00000413444.2"/>
    <property type="gene ID" value="ENSG00000144048.12"/>
</dbReference>
<dbReference type="Ensembl" id="ENST00000707649.1">
    <molecule id="O75319-3"/>
    <property type="protein sequence ID" value="ENSP00000516943.1"/>
    <property type="gene ID" value="ENSG00000291483.1"/>
</dbReference>
<dbReference type="Ensembl" id="ENST00000707657.1">
    <molecule id="O75319-2"/>
    <property type="protein sequence ID" value="ENSP00000516949.1"/>
    <property type="gene ID" value="ENSG00000291483.1"/>
</dbReference>
<dbReference type="Ensembl" id="ENST00000717658.1">
    <molecule id="O75319-1"/>
    <property type="protein sequence ID" value="ENSP00000520634.1"/>
    <property type="gene ID" value="ENSG00000144048.12"/>
</dbReference>
<dbReference type="GeneID" id="8446"/>
<dbReference type="KEGG" id="hsa:8446"/>
<dbReference type="MANE-Select" id="ENST00000272444.8">
    <property type="protein sequence ID" value="ENSP00000272444.4"/>
    <property type="RefSeq nucleotide sequence ID" value="NM_003584.3"/>
    <property type="RefSeq protein sequence ID" value="NP_003575.3"/>
</dbReference>
<dbReference type="UCSC" id="uc002sjp.4">
    <molecule id="O75319-3"/>
    <property type="organism name" value="human"/>
</dbReference>
<dbReference type="AGR" id="HGNC:3066"/>
<dbReference type="CTD" id="8446"/>
<dbReference type="DisGeNET" id="8446"/>
<dbReference type="GeneCards" id="DUSP11"/>
<dbReference type="HGNC" id="HGNC:3066">
    <property type="gene designation" value="DUSP11"/>
</dbReference>
<dbReference type="HPA" id="ENSG00000144048">
    <property type="expression patterns" value="Low tissue specificity"/>
</dbReference>
<dbReference type="MIM" id="603092">
    <property type="type" value="gene"/>
</dbReference>
<dbReference type="neXtProt" id="NX_O75319"/>
<dbReference type="OpenTargets" id="ENSG00000144048"/>
<dbReference type="PharmGKB" id="PA27521"/>
<dbReference type="VEuPathDB" id="HostDB:ENSG00000144048"/>
<dbReference type="eggNOG" id="KOG2386">
    <property type="taxonomic scope" value="Eukaryota"/>
</dbReference>
<dbReference type="GeneTree" id="ENSGT00940000155847"/>
<dbReference type="HOGENOM" id="CLU_057587_1_1_1"/>
<dbReference type="InParanoid" id="O75319"/>
<dbReference type="OMA" id="NRIPERW"/>
<dbReference type="OrthoDB" id="428974at2759"/>
<dbReference type="PAN-GO" id="O75319">
    <property type="GO annotations" value="1 GO annotation based on evolutionary models"/>
</dbReference>
<dbReference type="PhylomeDB" id="O75319"/>
<dbReference type="TreeFam" id="TF105124"/>
<dbReference type="PathwayCommons" id="O75319"/>
<dbReference type="SignaLink" id="O75319"/>
<dbReference type="BioGRID-ORCS" id="8446">
    <property type="hits" value="28 hits in 1176 CRISPR screens"/>
</dbReference>
<dbReference type="CD-CODE" id="804901D1">
    <property type="entry name" value="Nuclear speckle"/>
</dbReference>
<dbReference type="CD-CODE" id="91857CE7">
    <property type="entry name" value="Nucleolus"/>
</dbReference>
<dbReference type="ChiTaRS" id="DUSP11">
    <property type="organism name" value="human"/>
</dbReference>
<dbReference type="EvolutionaryTrace" id="O75319"/>
<dbReference type="GenomeRNAi" id="8446"/>
<dbReference type="Pharos" id="O75319">
    <property type="development level" value="Tbio"/>
</dbReference>
<dbReference type="PRO" id="PR:O75319"/>
<dbReference type="Proteomes" id="UP000005640">
    <property type="component" value="Chromosome 2"/>
</dbReference>
<dbReference type="RNAct" id="O75319">
    <property type="molecule type" value="protein"/>
</dbReference>
<dbReference type="Bgee" id="ENSG00000144048">
    <property type="expression patterns" value="Expressed in esophagus squamous epithelium and 206 other cell types or tissues"/>
</dbReference>
<dbReference type="ExpressionAtlas" id="O75319">
    <property type="expression patterns" value="baseline and differential"/>
</dbReference>
<dbReference type="GO" id="GO:0001650">
    <property type="term" value="C:fibrillar center"/>
    <property type="evidence" value="ECO:0000314"/>
    <property type="project" value="HPA"/>
</dbReference>
<dbReference type="GO" id="GO:0045171">
    <property type="term" value="C:intercellular bridge"/>
    <property type="evidence" value="ECO:0000314"/>
    <property type="project" value="HPA"/>
</dbReference>
<dbReference type="GO" id="GO:0005739">
    <property type="term" value="C:mitochondrion"/>
    <property type="evidence" value="ECO:0006056"/>
    <property type="project" value="FlyBase"/>
</dbReference>
<dbReference type="GO" id="GO:0016607">
    <property type="term" value="C:nuclear speck"/>
    <property type="evidence" value="ECO:0000314"/>
    <property type="project" value="UniProtKB"/>
</dbReference>
<dbReference type="GO" id="GO:0005654">
    <property type="term" value="C:nucleoplasm"/>
    <property type="evidence" value="ECO:0000314"/>
    <property type="project" value="HPA"/>
</dbReference>
<dbReference type="GO" id="GO:0005634">
    <property type="term" value="C:nucleus"/>
    <property type="evidence" value="ECO:0000304"/>
    <property type="project" value="ProtInc"/>
</dbReference>
<dbReference type="GO" id="GO:0016791">
    <property type="term" value="F:phosphatase activity"/>
    <property type="evidence" value="ECO:0000314"/>
    <property type="project" value="UniProtKB"/>
</dbReference>
<dbReference type="GO" id="GO:0004651">
    <property type="term" value="F:polynucleotide 5'-phosphatase activity"/>
    <property type="evidence" value="ECO:0000314"/>
    <property type="project" value="UniProtKB"/>
</dbReference>
<dbReference type="GO" id="GO:0004725">
    <property type="term" value="F:protein tyrosine phosphatase activity"/>
    <property type="evidence" value="ECO:0000314"/>
    <property type="project" value="UniProtKB"/>
</dbReference>
<dbReference type="GO" id="GO:0003723">
    <property type="term" value="F:RNA binding"/>
    <property type="evidence" value="ECO:0000314"/>
    <property type="project" value="UniProtKB"/>
</dbReference>
<dbReference type="GO" id="GO:0006470">
    <property type="term" value="P:protein dephosphorylation"/>
    <property type="evidence" value="ECO:0000314"/>
    <property type="project" value="UniProtKB"/>
</dbReference>
<dbReference type="GO" id="GO:0006396">
    <property type="term" value="P:RNA processing"/>
    <property type="evidence" value="ECO:0000304"/>
    <property type="project" value="ProtInc"/>
</dbReference>
<dbReference type="CDD" id="cd17665">
    <property type="entry name" value="DSP_DUSP11"/>
    <property type="match status" value="1"/>
</dbReference>
<dbReference type="FunFam" id="3.90.190.10:FF:000064">
    <property type="entry name" value="RNA/RNP complex-1-interacting phosphatase homolog"/>
    <property type="match status" value="1"/>
</dbReference>
<dbReference type="Gene3D" id="3.90.190.10">
    <property type="entry name" value="Protein tyrosine phosphatase superfamily"/>
    <property type="match status" value="1"/>
</dbReference>
<dbReference type="InterPro" id="IPR000340">
    <property type="entry name" value="Dual-sp_phosphatase_cat-dom"/>
</dbReference>
<dbReference type="InterPro" id="IPR051029">
    <property type="entry name" value="mRNA_Capping_Enz/RNA_Phosphat"/>
</dbReference>
<dbReference type="InterPro" id="IPR029021">
    <property type="entry name" value="Prot-tyrosine_phosphatase-like"/>
</dbReference>
<dbReference type="InterPro" id="IPR016130">
    <property type="entry name" value="Tyr_Pase_AS"/>
</dbReference>
<dbReference type="InterPro" id="IPR000387">
    <property type="entry name" value="Tyr_Pase_dom"/>
</dbReference>
<dbReference type="InterPro" id="IPR020422">
    <property type="entry name" value="TYR_PHOSPHATASE_DUAL_dom"/>
</dbReference>
<dbReference type="PANTHER" id="PTHR10367">
    <property type="entry name" value="MRNA-CAPPING ENZYME"/>
    <property type="match status" value="1"/>
</dbReference>
<dbReference type="PANTHER" id="PTHR10367:SF18">
    <property type="entry name" value="RNA_RNP COMPLEX-1-INTERACTING PHOSPHATASE"/>
    <property type="match status" value="1"/>
</dbReference>
<dbReference type="Pfam" id="PF00782">
    <property type="entry name" value="DSPc"/>
    <property type="match status" value="1"/>
</dbReference>
<dbReference type="SMART" id="SM00195">
    <property type="entry name" value="DSPc"/>
    <property type="match status" value="1"/>
</dbReference>
<dbReference type="SUPFAM" id="SSF52799">
    <property type="entry name" value="(Phosphotyrosine protein) phosphatases II"/>
    <property type="match status" value="1"/>
</dbReference>
<dbReference type="PROSITE" id="PS00383">
    <property type="entry name" value="TYR_PHOSPHATASE_1"/>
    <property type="match status" value="1"/>
</dbReference>
<dbReference type="PROSITE" id="PS50056">
    <property type="entry name" value="TYR_PHOSPHATASE_2"/>
    <property type="match status" value="1"/>
</dbReference>
<dbReference type="PROSITE" id="PS50054">
    <property type="entry name" value="TYR_PHOSPHATASE_DUAL"/>
    <property type="match status" value="1"/>
</dbReference>
<proteinExistence type="evidence at protein level"/>
<accession>O75319</accession>
<accession>B2RCT8</accession>
<accession>C9JYA6</accession>
<accession>Q6AI47</accession>
<accession>Q9BWE3</accession>
<keyword id="KW-0002">3D-structure</keyword>
<keyword id="KW-0024">Alternative initiation</keyword>
<keyword id="KW-0025">Alternative splicing</keyword>
<keyword id="KW-0378">Hydrolase</keyword>
<keyword id="KW-0539">Nucleus</keyword>
<keyword id="KW-0904">Protein phosphatase</keyword>
<keyword id="KW-1267">Proteomics identification</keyword>
<keyword id="KW-1185">Reference proteome</keyword>
<keyword id="KW-0694">RNA-binding</keyword>
<organism>
    <name type="scientific">Homo sapiens</name>
    <name type="common">Human</name>
    <dbReference type="NCBI Taxonomy" id="9606"/>
    <lineage>
        <taxon>Eukaryota</taxon>
        <taxon>Metazoa</taxon>
        <taxon>Chordata</taxon>
        <taxon>Craniata</taxon>
        <taxon>Vertebrata</taxon>
        <taxon>Euteleostomi</taxon>
        <taxon>Mammalia</taxon>
        <taxon>Eutheria</taxon>
        <taxon>Euarchontoglires</taxon>
        <taxon>Primates</taxon>
        <taxon>Haplorrhini</taxon>
        <taxon>Catarrhini</taxon>
        <taxon>Hominidae</taxon>
        <taxon>Homo</taxon>
    </lineage>
</organism>
<gene>
    <name evidence="11" type="primary">DUSP11</name>
    <name type="synonym">PIR1</name>
</gene>
<sequence length="330" mass="38939">MSQWHHPRSGWGRRRDFSGRSSAKKKGGNHIPERWKDYLPVGQRMPGTRFIAFKVPLQKSFEKKLAPEECFSPLDLFNKIREQNEELGLIIDLTYTQRYYKPEDLPETVPYLKIFTVGHQVPDDETIFKFKHAVNGFLKENKDNDKLIGVHCTHGLNRTGYLICRYLIDVEGVRPDDAIELFNRCRGHCLERQNYIEDLQNGPIRKNWNSSVPRSSDFEDSAHLMQPVHNKPVKQGPRYNLHQIQGHSAPRHFHTQTQSLQQSVRKFSENPHVYQRHHLPPPGPPGEDYSHRRYSWNVKPNASRAAQDRRRWYPYNYSRLSYPACWEWTQ</sequence>